<dbReference type="EC" id="2.7.7.6" evidence="1"/>
<dbReference type="EMBL" id="CP000252">
    <property type="protein sequence ID" value="ABC76173.1"/>
    <property type="molecule type" value="Genomic_DNA"/>
</dbReference>
<dbReference type="RefSeq" id="WP_011416207.1">
    <property type="nucleotide sequence ID" value="NC_007759.1"/>
</dbReference>
<dbReference type="SMR" id="Q2LQ86"/>
<dbReference type="FunCoup" id="Q2LQ86">
    <property type="interactions" value="501"/>
</dbReference>
<dbReference type="STRING" id="56780.SYN_00063"/>
<dbReference type="KEGG" id="sat:SYN_00063"/>
<dbReference type="eggNOG" id="COG0086">
    <property type="taxonomic scope" value="Bacteria"/>
</dbReference>
<dbReference type="HOGENOM" id="CLU_000524_3_1_7"/>
<dbReference type="InParanoid" id="Q2LQ86"/>
<dbReference type="OrthoDB" id="9815296at2"/>
<dbReference type="Proteomes" id="UP000001933">
    <property type="component" value="Chromosome"/>
</dbReference>
<dbReference type="GO" id="GO:0000428">
    <property type="term" value="C:DNA-directed RNA polymerase complex"/>
    <property type="evidence" value="ECO:0007669"/>
    <property type="project" value="UniProtKB-KW"/>
</dbReference>
<dbReference type="GO" id="GO:0003677">
    <property type="term" value="F:DNA binding"/>
    <property type="evidence" value="ECO:0007669"/>
    <property type="project" value="UniProtKB-UniRule"/>
</dbReference>
<dbReference type="GO" id="GO:0003899">
    <property type="term" value="F:DNA-directed RNA polymerase activity"/>
    <property type="evidence" value="ECO:0007669"/>
    <property type="project" value="UniProtKB-UniRule"/>
</dbReference>
<dbReference type="GO" id="GO:0000287">
    <property type="term" value="F:magnesium ion binding"/>
    <property type="evidence" value="ECO:0007669"/>
    <property type="project" value="UniProtKB-UniRule"/>
</dbReference>
<dbReference type="GO" id="GO:0008270">
    <property type="term" value="F:zinc ion binding"/>
    <property type="evidence" value="ECO:0007669"/>
    <property type="project" value="UniProtKB-UniRule"/>
</dbReference>
<dbReference type="GO" id="GO:0006351">
    <property type="term" value="P:DNA-templated transcription"/>
    <property type="evidence" value="ECO:0007669"/>
    <property type="project" value="UniProtKB-UniRule"/>
</dbReference>
<dbReference type="CDD" id="cd02655">
    <property type="entry name" value="RNAP_beta'_C"/>
    <property type="match status" value="1"/>
</dbReference>
<dbReference type="CDD" id="cd01609">
    <property type="entry name" value="RNAP_beta'_N"/>
    <property type="match status" value="1"/>
</dbReference>
<dbReference type="FunFam" id="1.10.132.30:FF:000003">
    <property type="entry name" value="DNA-directed RNA polymerase subunit beta"/>
    <property type="match status" value="1"/>
</dbReference>
<dbReference type="FunFam" id="1.10.150.390:FF:000002">
    <property type="entry name" value="DNA-directed RNA polymerase subunit beta"/>
    <property type="match status" value="1"/>
</dbReference>
<dbReference type="Gene3D" id="1.10.132.30">
    <property type="match status" value="1"/>
</dbReference>
<dbReference type="Gene3D" id="1.10.150.390">
    <property type="match status" value="1"/>
</dbReference>
<dbReference type="Gene3D" id="1.10.1790.20">
    <property type="match status" value="1"/>
</dbReference>
<dbReference type="Gene3D" id="1.10.40.90">
    <property type="match status" value="1"/>
</dbReference>
<dbReference type="Gene3D" id="2.40.40.20">
    <property type="match status" value="1"/>
</dbReference>
<dbReference type="Gene3D" id="2.40.50.100">
    <property type="match status" value="3"/>
</dbReference>
<dbReference type="Gene3D" id="4.10.860.120">
    <property type="entry name" value="RNA polymerase II, clamp domain"/>
    <property type="match status" value="1"/>
</dbReference>
<dbReference type="Gene3D" id="1.10.274.100">
    <property type="entry name" value="RNA polymerase Rpb1, domain 3"/>
    <property type="match status" value="2"/>
</dbReference>
<dbReference type="HAMAP" id="MF_01322">
    <property type="entry name" value="RNApol_bact_RpoC"/>
    <property type="match status" value="1"/>
</dbReference>
<dbReference type="InterPro" id="IPR045867">
    <property type="entry name" value="DNA-dir_RpoC_beta_prime"/>
</dbReference>
<dbReference type="InterPro" id="IPR012754">
    <property type="entry name" value="DNA-dir_RpoC_beta_prime_bact"/>
</dbReference>
<dbReference type="InterPro" id="IPR000722">
    <property type="entry name" value="RNA_pol_asu"/>
</dbReference>
<dbReference type="InterPro" id="IPR006592">
    <property type="entry name" value="RNA_pol_N"/>
</dbReference>
<dbReference type="InterPro" id="IPR007080">
    <property type="entry name" value="RNA_pol_Rpb1_1"/>
</dbReference>
<dbReference type="InterPro" id="IPR007066">
    <property type="entry name" value="RNA_pol_Rpb1_3"/>
</dbReference>
<dbReference type="InterPro" id="IPR042102">
    <property type="entry name" value="RNA_pol_Rpb1_3_sf"/>
</dbReference>
<dbReference type="InterPro" id="IPR007083">
    <property type="entry name" value="RNA_pol_Rpb1_4"/>
</dbReference>
<dbReference type="InterPro" id="IPR007081">
    <property type="entry name" value="RNA_pol_Rpb1_5"/>
</dbReference>
<dbReference type="InterPro" id="IPR044893">
    <property type="entry name" value="RNA_pol_Rpb1_clamp_domain"/>
</dbReference>
<dbReference type="InterPro" id="IPR038120">
    <property type="entry name" value="Rpb1_funnel_sf"/>
</dbReference>
<dbReference type="NCBIfam" id="TIGR02386">
    <property type="entry name" value="rpoC_TIGR"/>
    <property type="match status" value="1"/>
</dbReference>
<dbReference type="PANTHER" id="PTHR19376">
    <property type="entry name" value="DNA-DIRECTED RNA POLYMERASE"/>
    <property type="match status" value="1"/>
</dbReference>
<dbReference type="PANTHER" id="PTHR19376:SF54">
    <property type="entry name" value="DNA-DIRECTED RNA POLYMERASE SUBUNIT BETA"/>
    <property type="match status" value="1"/>
</dbReference>
<dbReference type="Pfam" id="PF04997">
    <property type="entry name" value="RNA_pol_Rpb1_1"/>
    <property type="match status" value="1"/>
</dbReference>
<dbReference type="Pfam" id="PF00623">
    <property type="entry name" value="RNA_pol_Rpb1_2"/>
    <property type="match status" value="2"/>
</dbReference>
<dbReference type="Pfam" id="PF04983">
    <property type="entry name" value="RNA_pol_Rpb1_3"/>
    <property type="match status" value="1"/>
</dbReference>
<dbReference type="Pfam" id="PF05000">
    <property type="entry name" value="RNA_pol_Rpb1_4"/>
    <property type="match status" value="1"/>
</dbReference>
<dbReference type="Pfam" id="PF04998">
    <property type="entry name" value="RNA_pol_Rpb1_5"/>
    <property type="match status" value="1"/>
</dbReference>
<dbReference type="SMART" id="SM00663">
    <property type="entry name" value="RPOLA_N"/>
    <property type="match status" value="1"/>
</dbReference>
<dbReference type="SUPFAM" id="SSF64484">
    <property type="entry name" value="beta and beta-prime subunits of DNA dependent RNA-polymerase"/>
    <property type="match status" value="1"/>
</dbReference>
<comment type="function">
    <text evidence="1">DNA-dependent RNA polymerase catalyzes the transcription of DNA into RNA using the four ribonucleoside triphosphates as substrates.</text>
</comment>
<comment type="catalytic activity">
    <reaction evidence="1">
        <text>RNA(n) + a ribonucleoside 5'-triphosphate = RNA(n+1) + diphosphate</text>
        <dbReference type="Rhea" id="RHEA:21248"/>
        <dbReference type="Rhea" id="RHEA-COMP:14527"/>
        <dbReference type="Rhea" id="RHEA-COMP:17342"/>
        <dbReference type="ChEBI" id="CHEBI:33019"/>
        <dbReference type="ChEBI" id="CHEBI:61557"/>
        <dbReference type="ChEBI" id="CHEBI:140395"/>
        <dbReference type="EC" id="2.7.7.6"/>
    </reaction>
</comment>
<comment type="cofactor">
    <cofactor evidence="1">
        <name>Mg(2+)</name>
        <dbReference type="ChEBI" id="CHEBI:18420"/>
    </cofactor>
    <text evidence="1">Binds 1 Mg(2+) ion per subunit.</text>
</comment>
<comment type="cofactor">
    <cofactor evidence="1">
        <name>Zn(2+)</name>
        <dbReference type="ChEBI" id="CHEBI:29105"/>
    </cofactor>
    <text evidence="1">Binds 2 Zn(2+) ions per subunit.</text>
</comment>
<comment type="subunit">
    <text evidence="1">The RNAP catalytic core consists of 2 alpha, 1 beta, 1 beta' and 1 omega subunit. When a sigma factor is associated with the core the holoenzyme is formed, which can initiate transcription.</text>
</comment>
<comment type="similarity">
    <text evidence="1">Belongs to the RNA polymerase beta' chain family.</text>
</comment>
<accession>Q2LQ86</accession>
<reference key="1">
    <citation type="journal article" date="2007" name="Proc. Natl. Acad. Sci. U.S.A.">
        <title>The genome of Syntrophus aciditrophicus: life at the thermodynamic limit of microbial growth.</title>
        <authorList>
            <person name="McInerney M.J."/>
            <person name="Rohlin L."/>
            <person name="Mouttaki H."/>
            <person name="Kim U."/>
            <person name="Krupp R.S."/>
            <person name="Rios-Hernandez L."/>
            <person name="Sieber J."/>
            <person name="Struchtemeyer C.G."/>
            <person name="Bhattacharyya A."/>
            <person name="Campbell J.W."/>
            <person name="Gunsalus R.P."/>
        </authorList>
    </citation>
    <scope>NUCLEOTIDE SEQUENCE [LARGE SCALE GENOMIC DNA]</scope>
    <source>
        <strain>SB</strain>
    </source>
</reference>
<name>RPOC_SYNAS</name>
<feature type="chain" id="PRO_0000240827" description="DNA-directed RNA polymerase subunit beta'">
    <location>
        <begin position="1"/>
        <end position="1381"/>
    </location>
</feature>
<feature type="region of interest" description="Disordered" evidence="2">
    <location>
        <begin position="1362"/>
        <end position="1381"/>
    </location>
</feature>
<feature type="compositionally biased region" description="Basic and acidic residues" evidence="2">
    <location>
        <begin position="1369"/>
        <end position="1381"/>
    </location>
</feature>
<feature type="binding site" evidence="1">
    <location>
        <position position="70"/>
    </location>
    <ligand>
        <name>Zn(2+)</name>
        <dbReference type="ChEBI" id="CHEBI:29105"/>
        <label>1</label>
    </ligand>
</feature>
<feature type="binding site" evidence="1">
    <location>
        <position position="72"/>
    </location>
    <ligand>
        <name>Zn(2+)</name>
        <dbReference type="ChEBI" id="CHEBI:29105"/>
        <label>1</label>
    </ligand>
</feature>
<feature type="binding site" evidence="1">
    <location>
        <position position="85"/>
    </location>
    <ligand>
        <name>Zn(2+)</name>
        <dbReference type="ChEBI" id="CHEBI:29105"/>
        <label>1</label>
    </ligand>
</feature>
<feature type="binding site" evidence="1">
    <location>
        <position position="88"/>
    </location>
    <ligand>
        <name>Zn(2+)</name>
        <dbReference type="ChEBI" id="CHEBI:29105"/>
        <label>1</label>
    </ligand>
</feature>
<feature type="binding site" evidence="1">
    <location>
        <position position="461"/>
    </location>
    <ligand>
        <name>Mg(2+)</name>
        <dbReference type="ChEBI" id="CHEBI:18420"/>
    </ligand>
</feature>
<feature type="binding site" evidence="1">
    <location>
        <position position="463"/>
    </location>
    <ligand>
        <name>Mg(2+)</name>
        <dbReference type="ChEBI" id="CHEBI:18420"/>
    </ligand>
</feature>
<feature type="binding site" evidence="1">
    <location>
        <position position="465"/>
    </location>
    <ligand>
        <name>Mg(2+)</name>
        <dbReference type="ChEBI" id="CHEBI:18420"/>
    </ligand>
</feature>
<feature type="binding site" evidence="1">
    <location>
        <position position="801"/>
    </location>
    <ligand>
        <name>Zn(2+)</name>
        <dbReference type="ChEBI" id="CHEBI:29105"/>
        <label>2</label>
    </ligand>
</feature>
<feature type="binding site" evidence="1">
    <location>
        <position position="875"/>
    </location>
    <ligand>
        <name>Zn(2+)</name>
        <dbReference type="ChEBI" id="CHEBI:29105"/>
        <label>2</label>
    </ligand>
</feature>
<feature type="binding site" evidence="1">
    <location>
        <position position="882"/>
    </location>
    <ligand>
        <name>Zn(2+)</name>
        <dbReference type="ChEBI" id="CHEBI:29105"/>
        <label>2</label>
    </ligand>
</feature>
<feature type="binding site" evidence="1">
    <location>
        <position position="885"/>
    </location>
    <ligand>
        <name>Zn(2+)</name>
        <dbReference type="ChEBI" id="CHEBI:29105"/>
        <label>2</label>
    </ligand>
</feature>
<organism>
    <name type="scientific">Syntrophus aciditrophicus (strain SB)</name>
    <dbReference type="NCBI Taxonomy" id="56780"/>
    <lineage>
        <taxon>Bacteria</taxon>
        <taxon>Pseudomonadati</taxon>
        <taxon>Thermodesulfobacteriota</taxon>
        <taxon>Syntrophia</taxon>
        <taxon>Syntrophales</taxon>
        <taxon>Syntrophaceae</taxon>
        <taxon>Syntrophus</taxon>
    </lineage>
</organism>
<evidence type="ECO:0000255" key="1">
    <source>
        <dbReference type="HAMAP-Rule" id="MF_01322"/>
    </source>
</evidence>
<evidence type="ECO:0000256" key="2">
    <source>
        <dbReference type="SAM" id="MobiDB-lite"/>
    </source>
</evidence>
<gene>
    <name evidence="1" type="primary">rpoC</name>
    <name type="ordered locus">SYNAS_02940</name>
    <name type="ORF">SYN_00063</name>
</gene>
<keyword id="KW-0240">DNA-directed RNA polymerase</keyword>
<keyword id="KW-0460">Magnesium</keyword>
<keyword id="KW-0479">Metal-binding</keyword>
<keyword id="KW-0548">Nucleotidyltransferase</keyword>
<keyword id="KW-1185">Reference proteome</keyword>
<keyword id="KW-0804">Transcription</keyword>
<keyword id="KW-0808">Transferase</keyword>
<keyword id="KW-0862">Zinc</keyword>
<sequence length="1381" mass="153997">MEDVFSYFEKPKDPIRFNAIKISIASPDKILSWSYGEVKKPETINYRTFKPERDGLFCAKIFGPVKDYECLCGRYKRMKHRGVVCEKCGVEVIKSKVRRERMGHITLATPVAHIWFLKSLPSRIGNVLDLTLKELERILYFESWIVLDPRNTPLRKKDLLSDEEYNDLREQYGPDGFQAGIGAEAVRKLLEEVDLEGLDVELRDELKTASSDTKRKKVIKRLKVIEALRKSGNRPEWMILTVLPVIPPDLRPLVPLDGGRFATSDLNDLYRRVINRNNRLKRLQELNAPEIIIRNEKRMLQEAVDVLFDNGRRGRAITGTNKRPLKSLSDMLKGKQGRFRQNLLGKRVDYSGRSVITVGPDLRLHQCGLPKKMALELFKPFVYNRLQEKGYVTTVKSAKKMVERETAEVWDALDEVVREYPVMLNRAPTLHRLGLQAFEPVLIEGKAIQLHPLVCTAFNADFDGDQMAVHVPLSIEAQTEARVLMMSTNNILSPANGKPIIIPSQDVVLGIYYLTRSKEDVLGHGMSFSNPEEVRSAFDAGAVELRARIKVRIDDELKETTVGRVILYEIIPEAISFDVINKVMNKKELANLIDYCYRLCGEKTTVILADRLKDMGFKYATHSGMSFAVRNLNIPKNKKDIVVRADRDVLEIQKQYMDGLITDGERYNKVIDLWAQATEKIASEMMGGIETEEQITTEGKKVVESFNPIYMMADSGARGSNAQIRQLAGMRGLMAKPSGEIIETPITANFREGLTVLQYFISTHGARKGLADTALKTANSGYLTRRLVDVAQDCIITQQDCGTVDGISVSALMEGGEIIETAGERVLGRVVLEDIMDPFTGEVLVGANQEIDESLSEKIDRAGIESVRIRSVLTCKAKYGVCARCYGRDLGHGHLVNIGEAVGIIAAQSIGEPGTQLTMRTFHIGGTAKFEEHSTLDSRHDGIVKYVDLNYVVSKIGETVVMSRHGEIHVLDEQLRSRGKYTVPYGAHLKVKDGQSVKRGDRMAEWDPFSIPILAEVDGTVKFGDIIEGKTMQEQVDEVTGLSRKVIVEFKGADLRPRVSLKDATGKTAKVPGTNAAARHLLSVGVNIVVSEGDQVKAGDIIAKIPRETTKTKDITGGLPRVAELFEARKPKDFAVISEIDGVVSYGKDAKGKRKVIVTPEIGDEKEYLIPKGKHVSVQEGDRVIAGEALMSGVNNPHDLLMIKGEKALARYLVDEVQEVYRLQGVKINDKHMEVIVRQMLRRVKVIDPGDTPFMADEQVEKFRFQEENEKAIARGEQPAIGEPVLLGITKASLSTQSFISAASFQETTRVLTEASLAGKVDYLRGLKENVIMGRLIPAGTGLVMYRKLGIKTVADEDAESVEIEGDENSNKKSLDMHAAN</sequence>
<protein>
    <recommendedName>
        <fullName evidence="1">DNA-directed RNA polymerase subunit beta'</fullName>
        <shortName evidence="1">RNAP subunit beta'</shortName>
        <ecNumber evidence="1">2.7.7.6</ecNumber>
    </recommendedName>
    <alternativeName>
        <fullName evidence="1">RNA polymerase subunit beta'</fullName>
    </alternativeName>
    <alternativeName>
        <fullName evidence="1">Transcriptase subunit beta'</fullName>
    </alternativeName>
</protein>
<proteinExistence type="inferred from homology"/>